<accession>Q7MID1</accession>
<protein>
    <recommendedName>
        <fullName evidence="1">Na(+)-translocating NADH-quinone reductase subunit E</fullName>
        <shortName evidence="1">Na(+)-NQR subunit E</shortName>
        <shortName evidence="1">Na(+)-translocating NQR subunit E</shortName>
        <ecNumber evidence="1">7.2.1.1</ecNumber>
    </recommendedName>
    <alternativeName>
        <fullName evidence="1">NQR complex subunit E</fullName>
    </alternativeName>
    <alternativeName>
        <fullName evidence="1">NQR-1 subunit E</fullName>
    </alternativeName>
</protein>
<evidence type="ECO:0000255" key="1">
    <source>
        <dbReference type="HAMAP-Rule" id="MF_00429"/>
    </source>
</evidence>
<feature type="chain" id="PRO_0000214263" description="Na(+)-translocating NADH-quinone reductase subunit E">
    <location>
        <begin position="1"/>
        <end position="198"/>
    </location>
</feature>
<feature type="transmembrane region" description="Helical" evidence="1">
    <location>
        <begin position="11"/>
        <end position="31"/>
    </location>
</feature>
<feature type="transmembrane region" description="Helical" evidence="1">
    <location>
        <begin position="39"/>
        <end position="59"/>
    </location>
</feature>
<feature type="transmembrane region" description="Helical" evidence="1">
    <location>
        <begin position="77"/>
        <end position="97"/>
    </location>
</feature>
<feature type="transmembrane region" description="Helical" evidence="1">
    <location>
        <begin position="110"/>
        <end position="130"/>
    </location>
</feature>
<feature type="transmembrane region" description="Helical" evidence="1">
    <location>
        <begin position="140"/>
        <end position="160"/>
    </location>
</feature>
<feature type="transmembrane region" description="Helical" evidence="1">
    <location>
        <begin position="176"/>
        <end position="196"/>
    </location>
</feature>
<organism>
    <name type="scientific">Vibrio vulnificus (strain YJ016)</name>
    <dbReference type="NCBI Taxonomy" id="196600"/>
    <lineage>
        <taxon>Bacteria</taxon>
        <taxon>Pseudomonadati</taxon>
        <taxon>Pseudomonadota</taxon>
        <taxon>Gammaproteobacteria</taxon>
        <taxon>Vibrionales</taxon>
        <taxon>Vibrionaceae</taxon>
        <taxon>Vibrio</taxon>
    </lineage>
</organism>
<comment type="function">
    <text evidence="1">NQR complex catalyzes the reduction of ubiquinone-1 to ubiquinol by two successive reactions, coupled with the transport of Na(+) ions from the cytoplasm to the periplasm. NqrA to NqrE are probably involved in the second step, the conversion of ubisemiquinone to ubiquinol.</text>
</comment>
<comment type="catalytic activity">
    <reaction evidence="1">
        <text>a ubiquinone + n Na(+)(in) + NADH + H(+) = a ubiquinol + n Na(+)(out) + NAD(+)</text>
        <dbReference type="Rhea" id="RHEA:47748"/>
        <dbReference type="Rhea" id="RHEA-COMP:9565"/>
        <dbReference type="Rhea" id="RHEA-COMP:9566"/>
        <dbReference type="ChEBI" id="CHEBI:15378"/>
        <dbReference type="ChEBI" id="CHEBI:16389"/>
        <dbReference type="ChEBI" id="CHEBI:17976"/>
        <dbReference type="ChEBI" id="CHEBI:29101"/>
        <dbReference type="ChEBI" id="CHEBI:57540"/>
        <dbReference type="ChEBI" id="CHEBI:57945"/>
        <dbReference type="EC" id="7.2.1.1"/>
    </reaction>
</comment>
<comment type="subunit">
    <text evidence="1">Composed of six subunits; NqrA, NqrB, NqrC, NqrD, NqrE and NqrF.</text>
</comment>
<comment type="subcellular location">
    <subcellularLocation>
        <location evidence="1">Cell inner membrane</location>
        <topology evidence="1">Multi-pass membrane protein</topology>
    </subcellularLocation>
</comment>
<comment type="similarity">
    <text evidence="1">Belongs to the NqrDE/RnfAE family.</text>
</comment>
<reference key="1">
    <citation type="journal article" date="2003" name="Genome Res.">
        <title>Comparative genome analysis of Vibrio vulnificus, a marine pathogen.</title>
        <authorList>
            <person name="Chen C.-Y."/>
            <person name="Wu K.-M."/>
            <person name="Chang Y.-C."/>
            <person name="Chang C.-H."/>
            <person name="Tsai H.-C."/>
            <person name="Liao T.-L."/>
            <person name="Liu Y.-M."/>
            <person name="Chen H.-J."/>
            <person name="Shen A.B.-T."/>
            <person name="Li J.-C."/>
            <person name="Su T.-L."/>
            <person name="Shao C.-P."/>
            <person name="Lee C.-T."/>
            <person name="Hor L.-I."/>
            <person name="Tsai S.-F."/>
        </authorList>
    </citation>
    <scope>NUCLEOTIDE SEQUENCE [LARGE SCALE GENOMIC DNA]</scope>
    <source>
        <strain>YJ016</strain>
    </source>
</reference>
<keyword id="KW-0997">Cell inner membrane</keyword>
<keyword id="KW-1003">Cell membrane</keyword>
<keyword id="KW-0406">Ion transport</keyword>
<keyword id="KW-0472">Membrane</keyword>
<keyword id="KW-0520">NAD</keyword>
<keyword id="KW-0915">Sodium</keyword>
<keyword id="KW-0739">Sodium transport</keyword>
<keyword id="KW-1278">Translocase</keyword>
<keyword id="KW-0812">Transmembrane</keyword>
<keyword id="KW-1133">Transmembrane helix</keyword>
<keyword id="KW-0813">Transport</keyword>
<keyword id="KW-0830">Ubiquinone</keyword>
<proteinExistence type="inferred from homology"/>
<sequence>MEHYISLLIKSIFIENMALSFFLGMCTFLAVSKKVKTSFGLGVAVVVVLTIAVPVNNLVYNLVLKENALVEGVDLSFLNFITFIGVIAALVQILEMILDRFFPPLYNALGIFLPLITVNCAIFGGVSFMVQRDYNFAESVVYGFGAGVGWMLAIVALAGIREKMKYSDVPPGLRGLGITFITVGLMALGFMSFSGVQL</sequence>
<dbReference type="EC" id="7.2.1.1" evidence="1"/>
<dbReference type="EMBL" id="BA000037">
    <property type="protein sequence ID" value="BAC95350.1"/>
    <property type="molecule type" value="Genomic_DNA"/>
</dbReference>
<dbReference type="RefSeq" id="WP_011079731.1">
    <property type="nucleotide sequence ID" value="NC_005139.1"/>
</dbReference>
<dbReference type="SMR" id="Q7MID1"/>
<dbReference type="STRING" id="672.VV93_v1c23040"/>
<dbReference type="GeneID" id="93896058"/>
<dbReference type="KEGG" id="vvy:VV2586"/>
<dbReference type="eggNOG" id="COG2209">
    <property type="taxonomic scope" value="Bacteria"/>
</dbReference>
<dbReference type="HOGENOM" id="CLU_095255_0_0_6"/>
<dbReference type="Proteomes" id="UP000002675">
    <property type="component" value="Chromosome I"/>
</dbReference>
<dbReference type="GO" id="GO:0009276">
    <property type="term" value="C:Gram-negative-bacterium-type cell wall"/>
    <property type="evidence" value="ECO:0007669"/>
    <property type="project" value="InterPro"/>
</dbReference>
<dbReference type="GO" id="GO:0005886">
    <property type="term" value="C:plasma membrane"/>
    <property type="evidence" value="ECO:0007669"/>
    <property type="project" value="UniProtKB-SubCell"/>
</dbReference>
<dbReference type="GO" id="GO:0016655">
    <property type="term" value="F:oxidoreductase activity, acting on NAD(P)H, quinone or similar compound as acceptor"/>
    <property type="evidence" value="ECO:0007669"/>
    <property type="project" value="UniProtKB-UniRule"/>
</dbReference>
<dbReference type="GO" id="GO:0022904">
    <property type="term" value="P:respiratory electron transport chain"/>
    <property type="evidence" value="ECO:0007669"/>
    <property type="project" value="InterPro"/>
</dbReference>
<dbReference type="GO" id="GO:0006814">
    <property type="term" value="P:sodium ion transport"/>
    <property type="evidence" value="ECO:0007669"/>
    <property type="project" value="UniProtKB-UniRule"/>
</dbReference>
<dbReference type="HAMAP" id="MF_00429">
    <property type="entry name" value="NqrE"/>
    <property type="match status" value="1"/>
</dbReference>
<dbReference type="InterPro" id="IPR003667">
    <property type="entry name" value="NqrDE/RnfAE"/>
</dbReference>
<dbReference type="InterPro" id="IPR050133">
    <property type="entry name" value="NqrDE/RnfAE_oxidrdctase"/>
</dbReference>
<dbReference type="InterPro" id="IPR010967">
    <property type="entry name" value="NqrE"/>
</dbReference>
<dbReference type="NCBIfam" id="TIGR01940">
    <property type="entry name" value="nqrE"/>
    <property type="match status" value="1"/>
</dbReference>
<dbReference type="PANTHER" id="PTHR30335">
    <property type="entry name" value="INTEGRAL MEMBRANE PROTEIN OF SOXR-REDUCING COMPLEX"/>
    <property type="match status" value="1"/>
</dbReference>
<dbReference type="PANTHER" id="PTHR30335:SF1">
    <property type="entry name" value="NA(+)-TRANSLOCATING NADH-QUINONE REDUCTASE SUBUNIT E"/>
    <property type="match status" value="1"/>
</dbReference>
<dbReference type="Pfam" id="PF02508">
    <property type="entry name" value="Rnf-Nqr"/>
    <property type="match status" value="1"/>
</dbReference>
<dbReference type="PIRSF" id="PIRSF006102">
    <property type="entry name" value="NQR_DE"/>
    <property type="match status" value="1"/>
</dbReference>
<name>NQRE_VIBVY</name>
<gene>
    <name evidence="1" type="primary">nqrE</name>
    <name type="ordered locus">VV2586</name>
</gene>